<comment type="function">
    <text evidence="1">One of the primary rRNA binding proteins. Required for association of the 30S and 50S subunits to form the 70S ribosome, for tRNA binding and peptide bond formation. It has been suggested to have peptidyltransferase activity; this is somewhat controversial. Makes several contacts with the 16S rRNA in the 70S ribosome.</text>
</comment>
<comment type="subunit">
    <text evidence="1">Part of the 50S ribosomal subunit. Forms a bridge to the 30S subunit in the 70S ribosome.</text>
</comment>
<comment type="similarity">
    <text evidence="1">Belongs to the universal ribosomal protein uL2 family.</text>
</comment>
<dbReference type="EMBL" id="BA000021">
    <property type="protein sequence ID" value="BAC24692.1"/>
    <property type="molecule type" value="Genomic_DNA"/>
</dbReference>
<dbReference type="SMR" id="Q8D209"/>
<dbReference type="STRING" id="36870.gene:10369055"/>
<dbReference type="KEGG" id="wbr:rplB"/>
<dbReference type="eggNOG" id="COG0090">
    <property type="taxonomic scope" value="Bacteria"/>
</dbReference>
<dbReference type="HOGENOM" id="CLU_036235_2_1_6"/>
<dbReference type="OrthoDB" id="9778722at2"/>
<dbReference type="Proteomes" id="UP000000562">
    <property type="component" value="Chromosome"/>
</dbReference>
<dbReference type="GO" id="GO:0015934">
    <property type="term" value="C:large ribosomal subunit"/>
    <property type="evidence" value="ECO:0007669"/>
    <property type="project" value="InterPro"/>
</dbReference>
<dbReference type="GO" id="GO:0019843">
    <property type="term" value="F:rRNA binding"/>
    <property type="evidence" value="ECO:0007669"/>
    <property type="project" value="UniProtKB-UniRule"/>
</dbReference>
<dbReference type="GO" id="GO:0003735">
    <property type="term" value="F:structural constituent of ribosome"/>
    <property type="evidence" value="ECO:0007669"/>
    <property type="project" value="InterPro"/>
</dbReference>
<dbReference type="GO" id="GO:0016740">
    <property type="term" value="F:transferase activity"/>
    <property type="evidence" value="ECO:0007669"/>
    <property type="project" value="InterPro"/>
</dbReference>
<dbReference type="GO" id="GO:0002181">
    <property type="term" value="P:cytoplasmic translation"/>
    <property type="evidence" value="ECO:0007669"/>
    <property type="project" value="TreeGrafter"/>
</dbReference>
<dbReference type="FunFam" id="2.30.30.30:FF:000001">
    <property type="entry name" value="50S ribosomal protein L2"/>
    <property type="match status" value="1"/>
</dbReference>
<dbReference type="FunFam" id="2.40.50.140:FF:000003">
    <property type="entry name" value="50S ribosomal protein L2"/>
    <property type="match status" value="1"/>
</dbReference>
<dbReference type="FunFam" id="4.10.950.10:FF:000001">
    <property type="entry name" value="50S ribosomal protein L2"/>
    <property type="match status" value="1"/>
</dbReference>
<dbReference type="Gene3D" id="2.30.30.30">
    <property type="match status" value="1"/>
</dbReference>
<dbReference type="Gene3D" id="2.40.50.140">
    <property type="entry name" value="Nucleic acid-binding proteins"/>
    <property type="match status" value="1"/>
</dbReference>
<dbReference type="Gene3D" id="4.10.950.10">
    <property type="entry name" value="Ribosomal protein L2, domain 3"/>
    <property type="match status" value="1"/>
</dbReference>
<dbReference type="HAMAP" id="MF_01320_B">
    <property type="entry name" value="Ribosomal_uL2_B"/>
    <property type="match status" value="1"/>
</dbReference>
<dbReference type="InterPro" id="IPR012340">
    <property type="entry name" value="NA-bd_OB-fold"/>
</dbReference>
<dbReference type="InterPro" id="IPR014722">
    <property type="entry name" value="Rib_uL2_dom2"/>
</dbReference>
<dbReference type="InterPro" id="IPR002171">
    <property type="entry name" value="Ribosomal_uL2"/>
</dbReference>
<dbReference type="InterPro" id="IPR005880">
    <property type="entry name" value="Ribosomal_uL2_bac/org-type"/>
</dbReference>
<dbReference type="InterPro" id="IPR022669">
    <property type="entry name" value="Ribosomal_uL2_C"/>
</dbReference>
<dbReference type="InterPro" id="IPR022671">
    <property type="entry name" value="Ribosomal_uL2_CS"/>
</dbReference>
<dbReference type="InterPro" id="IPR014726">
    <property type="entry name" value="Ribosomal_uL2_dom3"/>
</dbReference>
<dbReference type="InterPro" id="IPR022666">
    <property type="entry name" value="Ribosomal_uL2_RNA-bd_dom"/>
</dbReference>
<dbReference type="InterPro" id="IPR008991">
    <property type="entry name" value="Translation_prot_SH3-like_sf"/>
</dbReference>
<dbReference type="NCBIfam" id="TIGR01171">
    <property type="entry name" value="rplB_bact"/>
    <property type="match status" value="1"/>
</dbReference>
<dbReference type="PANTHER" id="PTHR13691:SF5">
    <property type="entry name" value="LARGE RIBOSOMAL SUBUNIT PROTEIN UL2M"/>
    <property type="match status" value="1"/>
</dbReference>
<dbReference type="PANTHER" id="PTHR13691">
    <property type="entry name" value="RIBOSOMAL PROTEIN L2"/>
    <property type="match status" value="1"/>
</dbReference>
<dbReference type="Pfam" id="PF00181">
    <property type="entry name" value="Ribosomal_L2"/>
    <property type="match status" value="1"/>
</dbReference>
<dbReference type="Pfam" id="PF03947">
    <property type="entry name" value="Ribosomal_L2_C"/>
    <property type="match status" value="1"/>
</dbReference>
<dbReference type="PIRSF" id="PIRSF002158">
    <property type="entry name" value="Ribosomal_L2"/>
    <property type="match status" value="1"/>
</dbReference>
<dbReference type="SMART" id="SM01383">
    <property type="entry name" value="Ribosomal_L2"/>
    <property type="match status" value="1"/>
</dbReference>
<dbReference type="SMART" id="SM01382">
    <property type="entry name" value="Ribosomal_L2_C"/>
    <property type="match status" value="1"/>
</dbReference>
<dbReference type="SUPFAM" id="SSF50249">
    <property type="entry name" value="Nucleic acid-binding proteins"/>
    <property type="match status" value="1"/>
</dbReference>
<dbReference type="SUPFAM" id="SSF50104">
    <property type="entry name" value="Translation proteins SH3-like domain"/>
    <property type="match status" value="1"/>
</dbReference>
<dbReference type="PROSITE" id="PS00467">
    <property type="entry name" value="RIBOSOMAL_L2"/>
    <property type="match status" value="1"/>
</dbReference>
<accession>Q8D209</accession>
<reference key="1">
    <citation type="journal article" date="2002" name="Nat. Genet.">
        <title>Genome sequence of the endocellular obligate symbiont of tsetse flies, Wigglesworthia glossinidia.</title>
        <authorList>
            <person name="Akman L."/>
            <person name="Yamashita A."/>
            <person name="Watanabe H."/>
            <person name="Oshima K."/>
            <person name="Shiba T."/>
            <person name="Hattori M."/>
            <person name="Aksoy S."/>
        </authorList>
    </citation>
    <scope>NUCLEOTIDE SEQUENCE [LARGE SCALE GENOMIC DNA]</scope>
</reference>
<evidence type="ECO:0000255" key="1">
    <source>
        <dbReference type="HAMAP-Rule" id="MF_01320"/>
    </source>
</evidence>
<evidence type="ECO:0000256" key="2">
    <source>
        <dbReference type="SAM" id="MobiDB-lite"/>
    </source>
</evidence>
<evidence type="ECO:0000305" key="3"/>
<gene>
    <name evidence="1" type="primary">rplB</name>
    <name type="ordered locus">WIGBR5460</name>
</gene>
<keyword id="KW-1185">Reference proteome</keyword>
<keyword id="KW-0687">Ribonucleoprotein</keyword>
<keyword id="KW-0689">Ribosomal protein</keyword>
<keyword id="KW-0694">RNA-binding</keyword>
<keyword id="KW-0699">rRNA-binding</keyword>
<sequence>MTLNKCNPTTPSRRHTVKVVNNKLYKGKSFFKLTKSLNKSGGRNNQGRITTRHIGGRHKRKYRLIDFKRNKDDILAKVKRLEYDPNRSSNIALISYEDGEMRYILEAKGLKIGDKVQSGINAPIKIGNALPIKMFPFGSILHNIEIKPGKGGQIARSAGSYAQVVTHEKNYVIVKLRSGEIRKIFSECKATFGEVGNSEYMLKSLGKAGANRWRGIRPTVRGTAMNPIDHPHGGGEGKNFGKHPVSPWGVQSKGKKTRKNKRTEKYILYNRKYKK</sequence>
<feature type="chain" id="PRO_0000129651" description="Large ribosomal subunit protein uL2">
    <location>
        <begin position="1"/>
        <end position="275"/>
    </location>
</feature>
<feature type="region of interest" description="Disordered" evidence="2">
    <location>
        <begin position="221"/>
        <end position="275"/>
    </location>
</feature>
<feature type="compositionally biased region" description="Basic residues" evidence="2">
    <location>
        <begin position="253"/>
        <end position="262"/>
    </location>
</feature>
<organism>
    <name type="scientific">Wigglesworthia glossinidia brevipalpis</name>
    <dbReference type="NCBI Taxonomy" id="36870"/>
    <lineage>
        <taxon>Bacteria</taxon>
        <taxon>Pseudomonadati</taxon>
        <taxon>Pseudomonadota</taxon>
        <taxon>Gammaproteobacteria</taxon>
        <taxon>Enterobacterales</taxon>
        <taxon>Erwiniaceae</taxon>
        <taxon>Wigglesworthia</taxon>
    </lineage>
</organism>
<protein>
    <recommendedName>
        <fullName evidence="1">Large ribosomal subunit protein uL2</fullName>
    </recommendedName>
    <alternativeName>
        <fullName evidence="3">50S ribosomal protein L2</fullName>
    </alternativeName>
</protein>
<name>RL2_WIGBR</name>
<proteinExistence type="inferred from homology"/>